<organism>
    <name type="scientific">Escherichia coli O8 (strain IAI1)</name>
    <dbReference type="NCBI Taxonomy" id="585034"/>
    <lineage>
        <taxon>Bacteria</taxon>
        <taxon>Pseudomonadati</taxon>
        <taxon>Pseudomonadota</taxon>
        <taxon>Gammaproteobacteria</taxon>
        <taxon>Enterobacterales</taxon>
        <taxon>Enterobacteriaceae</taxon>
        <taxon>Escherichia</taxon>
    </lineage>
</organism>
<keyword id="KW-0010">Activator</keyword>
<keyword id="KW-0963">Cytoplasm</keyword>
<keyword id="KW-0238">DNA-binding</keyword>
<keyword id="KW-0677">Repeat</keyword>
<keyword id="KW-0684">Rhamnose metabolism</keyword>
<keyword id="KW-0804">Transcription</keyword>
<keyword id="KW-0805">Transcription regulation</keyword>
<name>RHAS_ECO8A</name>
<proteinExistence type="inferred from homology"/>
<accession>B7M6V7</accession>
<dbReference type="EMBL" id="CU928160">
    <property type="protein sequence ID" value="CAR00882.1"/>
    <property type="molecule type" value="Genomic_DNA"/>
</dbReference>
<dbReference type="RefSeq" id="WP_000217137.1">
    <property type="nucleotide sequence ID" value="NC_011741.1"/>
</dbReference>
<dbReference type="SMR" id="B7M6V7"/>
<dbReference type="GeneID" id="75204579"/>
<dbReference type="KEGG" id="ecr:ECIAI1_4111"/>
<dbReference type="HOGENOM" id="CLU_000445_88_5_6"/>
<dbReference type="GO" id="GO:0005737">
    <property type="term" value="C:cytoplasm"/>
    <property type="evidence" value="ECO:0007669"/>
    <property type="project" value="UniProtKB-SubCell"/>
</dbReference>
<dbReference type="GO" id="GO:0003700">
    <property type="term" value="F:DNA-binding transcription factor activity"/>
    <property type="evidence" value="ECO:0007669"/>
    <property type="project" value="UniProtKB-UniRule"/>
</dbReference>
<dbReference type="GO" id="GO:0043565">
    <property type="term" value="F:sequence-specific DNA binding"/>
    <property type="evidence" value="ECO:0007669"/>
    <property type="project" value="InterPro"/>
</dbReference>
<dbReference type="GO" id="GO:0045893">
    <property type="term" value="P:positive regulation of DNA-templated transcription"/>
    <property type="evidence" value="ECO:0007669"/>
    <property type="project" value="UniProtKB-UniRule"/>
</dbReference>
<dbReference type="GO" id="GO:0019299">
    <property type="term" value="P:rhamnose metabolic process"/>
    <property type="evidence" value="ECO:0007669"/>
    <property type="project" value="UniProtKB-UniRule"/>
</dbReference>
<dbReference type="CDD" id="cd06977">
    <property type="entry name" value="cupin_RhaR_RhaS-like_N"/>
    <property type="match status" value="1"/>
</dbReference>
<dbReference type="FunFam" id="1.10.10.60:FF:000181">
    <property type="entry name" value="HTH-type transcriptional activator RhaS"/>
    <property type="match status" value="1"/>
</dbReference>
<dbReference type="FunFam" id="2.60.120.10:FF:000041">
    <property type="entry name" value="HTH-type transcriptional activator RhaS"/>
    <property type="match status" value="1"/>
</dbReference>
<dbReference type="Gene3D" id="1.10.10.60">
    <property type="entry name" value="Homeodomain-like"/>
    <property type="match status" value="1"/>
</dbReference>
<dbReference type="Gene3D" id="2.60.120.10">
    <property type="entry name" value="Jelly Rolls"/>
    <property type="match status" value="1"/>
</dbReference>
<dbReference type="HAMAP" id="MF_01534">
    <property type="entry name" value="HTH_type_RhaS"/>
    <property type="match status" value="1"/>
</dbReference>
<dbReference type="InterPro" id="IPR003313">
    <property type="entry name" value="AraC-bd"/>
</dbReference>
<dbReference type="InterPro" id="IPR050204">
    <property type="entry name" value="AraC_XylS_family_regulators"/>
</dbReference>
<dbReference type="InterPro" id="IPR009057">
    <property type="entry name" value="Homeodomain-like_sf"/>
</dbReference>
<dbReference type="InterPro" id="IPR037923">
    <property type="entry name" value="HTH-like"/>
</dbReference>
<dbReference type="InterPro" id="IPR018060">
    <property type="entry name" value="HTH_AraC"/>
</dbReference>
<dbReference type="InterPro" id="IPR018062">
    <property type="entry name" value="HTH_AraC-typ_CS"/>
</dbReference>
<dbReference type="InterPro" id="IPR047220">
    <property type="entry name" value="RhaR_RhaS-like_N"/>
</dbReference>
<dbReference type="InterPro" id="IPR014710">
    <property type="entry name" value="RmlC-like_jellyroll"/>
</dbReference>
<dbReference type="InterPro" id="IPR020449">
    <property type="entry name" value="Tscrpt_reg_AraC-type_HTH"/>
</dbReference>
<dbReference type="InterPro" id="IPR023609">
    <property type="entry name" value="Tscrpt_reg_HTH_RhaS"/>
</dbReference>
<dbReference type="NCBIfam" id="NF010028">
    <property type="entry name" value="PRK13503.1"/>
    <property type="match status" value="1"/>
</dbReference>
<dbReference type="PANTHER" id="PTHR46796:SF13">
    <property type="entry name" value="HTH-TYPE TRANSCRIPTIONAL ACTIVATOR RHAS"/>
    <property type="match status" value="1"/>
</dbReference>
<dbReference type="PANTHER" id="PTHR46796">
    <property type="entry name" value="HTH-TYPE TRANSCRIPTIONAL ACTIVATOR RHAS-RELATED"/>
    <property type="match status" value="1"/>
</dbReference>
<dbReference type="Pfam" id="PF02311">
    <property type="entry name" value="AraC_binding"/>
    <property type="match status" value="1"/>
</dbReference>
<dbReference type="Pfam" id="PF12833">
    <property type="entry name" value="HTH_18"/>
    <property type="match status" value="1"/>
</dbReference>
<dbReference type="PRINTS" id="PR00032">
    <property type="entry name" value="HTHARAC"/>
</dbReference>
<dbReference type="SMART" id="SM00342">
    <property type="entry name" value="HTH_ARAC"/>
    <property type="match status" value="1"/>
</dbReference>
<dbReference type="SUPFAM" id="SSF46689">
    <property type="entry name" value="Homeodomain-like"/>
    <property type="match status" value="2"/>
</dbReference>
<dbReference type="SUPFAM" id="SSF51215">
    <property type="entry name" value="Regulatory protein AraC"/>
    <property type="match status" value="1"/>
</dbReference>
<dbReference type="PROSITE" id="PS00041">
    <property type="entry name" value="HTH_ARAC_FAMILY_1"/>
    <property type="match status" value="1"/>
</dbReference>
<dbReference type="PROSITE" id="PS01124">
    <property type="entry name" value="HTH_ARAC_FAMILY_2"/>
    <property type="match status" value="1"/>
</dbReference>
<feature type="chain" id="PRO_1000200955" description="HTH-type transcriptional activator RhaS">
    <location>
        <begin position="1"/>
        <end position="278"/>
    </location>
</feature>
<feature type="domain" description="HTH araC/xylS-type" evidence="1">
    <location>
        <begin position="174"/>
        <end position="272"/>
    </location>
</feature>
<feature type="DNA-binding region" description="H-T-H motif" evidence="1">
    <location>
        <begin position="191"/>
        <end position="212"/>
    </location>
</feature>
<feature type="DNA-binding region" description="H-T-H motif" evidence="1">
    <location>
        <begin position="239"/>
        <end position="262"/>
    </location>
</feature>
<feature type="site" description="Interaction with sigma-70" evidence="1">
    <location>
        <position position="241"/>
    </location>
</feature>
<feature type="site" description="Interaction with sigma-70" evidence="1">
    <location>
        <position position="250"/>
    </location>
</feature>
<sequence>MTVLHSVDFFPSGNASVAIEPRLPQADFPEHHHDFHEIVIVEHGTGIHVFNGQPYTITGGTVCFVRDHDRHLYEHTDNLCLTNVLYRSPDRFQFLAGLNQLLPQELDGQYPSHWRVNHSVLQQVRQLVAQMEQQEGENDLPSTASREILFMQLLLLLRKSSLQENLENSASRLNLLLAWLEDHFADEVNWDAVADQFSLSLRTLHRQLKQQTGLTPQRYLNRLRLMKARHLLRHSEASVTDIAYRCGFSDSNHFSTLFRREFNWSPRDIRQGRDGFLQ</sequence>
<comment type="function">
    <text evidence="1">Activates expression of the rhaBAD and rhaT operons.</text>
</comment>
<comment type="subunit">
    <text evidence="1">Binds DNA as a dimer.</text>
</comment>
<comment type="subcellular location">
    <subcellularLocation>
        <location evidence="1">Cytoplasm</location>
    </subcellularLocation>
</comment>
<evidence type="ECO:0000255" key="1">
    <source>
        <dbReference type="HAMAP-Rule" id="MF_01534"/>
    </source>
</evidence>
<protein>
    <recommendedName>
        <fullName evidence="1">HTH-type transcriptional activator RhaS</fullName>
    </recommendedName>
    <alternativeName>
        <fullName evidence="1">L-rhamnose operon regulatory protein RhaS</fullName>
    </alternativeName>
</protein>
<gene>
    <name evidence="1" type="primary">rhaS</name>
    <name type="ordered locus">ECIAI1_4111</name>
</gene>
<reference key="1">
    <citation type="journal article" date="2009" name="PLoS Genet.">
        <title>Organised genome dynamics in the Escherichia coli species results in highly diverse adaptive paths.</title>
        <authorList>
            <person name="Touchon M."/>
            <person name="Hoede C."/>
            <person name="Tenaillon O."/>
            <person name="Barbe V."/>
            <person name="Baeriswyl S."/>
            <person name="Bidet P."/>
            <person name="Bingen E."/>
            <person name="Bonacorsi S."/>
            <person name="Bouchier C."/>
            <person name="Bouvet O."/>
            <person name="Calteau A."/>
            <person name="Chiapello H."/>
            <person name="Clermont O."/>
            <person name="Cruveiller S."/>
            <person name="Danchin A."/>
            <person name="Diard M."/>
            <person name="Dossat C."/>
            <person name="Karoui M.E."/>
            <person name="Frapy E."/>
            <person name="Garry L."/>
            <person name="Ghigo J.M."/>
            <person name="Gilles A.M."/>
            <person name="Johnson J."/>
            <person name="Le Bouguenec C."/>
            <person name="Lescat M."/>
            <person name="Mangenot S."/>
            <person name="Martinez-Jehanne V."/>
            <person name="Matic I."/>
            <person name="Nassif X."/>
            <person name="Oztas S."/>
            <person name="Petit M.A."/>
            <person name="Pichon C."/>
            <person name="Rouy Z."/>
            <person name="Ruf C.S."/>
            <person name="Schneider D."/>
            <person name="Tourret J."/>
            <person name="Vacherie B."/>
            <person name="Vallenet D."/>
            <person name="Medigue C."/>
            <person name="Rocha E.P.C."/>
            <person name="Denamur E."/>
        </authorList>
    </citation>
    <scope>NUCLEOTIDE SEQUENCE [LARGE SCALE GENOMIC DNA]</scope>
    <source>
        <strain>IAI1</strain>
    </source>
</reference>